<name>Y1856_STRPQ</name>
<protein>
    <recommendedName>
        <fullName>Putative sugar uptake protein SPs1852</fullName>
    </recommendedName>
</protein>
<dbReference type="EMBL" id="BA000034">
    <property type="protein sequence ID" value="BAC64947.1"/>
    <property type="status" value="ALT_INIT"/>
    <property type="molecule type" value="Genomic_DNA"/>
</dbReference>
<dbReference type="RefSeq" id="WP_002992310.1">
    <property type="nucleotide sequence ID" value="NC_004606.1"/>
</dbReference>
<dbReference type="SMR" id="P0DB51"/>
<dbReference type="KEGG" id="sps:SPs1852"/>
<dbReference type="HOGENOM" id="CLU_076024_0_0_9"/>
<dbReference type="GO" id="GO:0005886">
    <property type="term" value="C:plasma membrane"/>
    <property type="evidence" value="ECO:0007669"/>
    <property type="project" value="UniProtKB-SubCell"/>
</dbReference>
<dbReference type="GO" id="GO:0015144">
    <property type="term" value="F:carbohydrate transmembrane transporter activity"/>
    <property type="evidence" value="ECO:0007669"/>
    <property type="project" value="InterPro"/>
</dbReference>
<dbReference type="CDD" id="cd23110">
    <property type="entry name" value="GRP"/>
    <property type="match status" value="1"/>
</dbReference>
<dbReference type="InterPro" id="IPR010651">
    <property type="entry name" value="Sugar_transport"/>
</dbReference>
<dbReference type="NCBIfam" id="TIGR00776">
    <property type="entry name" value="RhaT"/>
    <property type="match status" value="1"/>
</dbReference>
<dbReference type="PANTHER" id="PTHR16119">
    <property type="entry name" value="TRANSMEMBRANE PROTEIN 144"/>
    <property type="match status" value="1"/>
</dbReference>
<dbReference type="PANTHER" id="PTHR16119:SF17">
    <property type="entry name" value="TRANSMEMBRANE PROTEIN 144"/>
    <property type="match status" value="1"/>
</dbReference>
<dbReference type="Pfam" id="PF06800">
    <property type="entry name" value="Sugar_transport"/>
    <property type="match status" value="1"/>
</dbReference>
<dbReference type="SUPFAM" id="SSF103481">
    <property type="entry name" value="Multidrug resistance efflux transporter EmrE"/>
    <property type="match status" value="1"/>
</dbReference>
<evidence type="ECO:0000255" key="1"/>
<evidence type="ECO:0000305" key="2"/>
<organism>
    <name type="scientific">Streptococcus pyogenes serotype M3 (strain SSI-1)</name>
    <dbReference type="NCBI Taxonomy" id="193567"/>
    <lineage>
        <taxon>Bacteria</taxon>
        <taxon>Bacillati</taxon>
        <taxon>Bacillota</taxon>
        <taxon>Bacilli</taxon>
        <taxon>Lactobacillales</taxon>
        <taxon>Streptococcaceae</taxon>
        <taxon>Streptococcus</taxon>
    </lineage>
</organism>
<comment type="subcellular location">
    <subcellularLocation>
        <location evidence="2">Cell membrane</location>
        <topology evidence="2">Multi-pass membrane protein</topology>
    </subcellularLocation>
</comment>
<comment type="similarity">
    <text evidence="2">Belongs to the GRP transporter (TC 2.A.7.5) family.</text>
</comment>
<comment type="sequence caution" evidence="2">
    <conflict type="erroneous initiation">
        <sequence resource="EMBL-CDS" id="BAC64947"/>
    </conflict>
</comment>
<gene>
    <name type="ordered locus">SPs1852</name>
</gene>
<reference key="1">
    <citation type="journal article" date="2003" name="Genome Res.">
        <title>Genome sequence of an M3 strain of Streptococcus pyogenes reveals a large-scale genomic rearrangement in invasive strains and new insights into phage evolution.</title>
        <authorList>
            <person name="Nakagawa I."/>
            <person name="Kurokawa K."/>
            <person name="Yamashita A."/>
            <person name="Nakata M."/>
            <person name="Tomiyasu Y."/>
            <person name="Okahashi N."/>
            <person name="Kawabata S."/>
            <person name="Yamazaki K."/>
            <person name="Shiba T."/>
            <person name="Yasunaga T."/>
            <person name="Hayashi H."/>
            <person name="Hattori M."/>
            <person name="Hamada S."/>
        </authorList>
    </citation>
    <scope>NUCLEOTIDE SEQUENCE [LARGE SCALE GENOMIC DNA]</scope>
    <source>
        <strain>SSI-1</strain>
    </source>
</reference>
<accession>P0DB51</accession>
<accession>P60948</accession>
<accession>Q99XH5</accession>
<sequence>MEGIFYALIPMFTWGSIGFVSNKIGGKPSQQTLGMTFGALLFSLAVWLIVRPEMTLQLWLFGILGGFIWSIGQTGQFHAMQYMGVSVANPLSSGSQLVLGSLIGVLVFHEWTRPMQFVVGSLALLLLIVGFYFSSKQDDANAQVNHLHNFSKGFRALTYSTIGYVMYAVLFNNIMKFEVLSVILPMAVGMVLGAITFMSFKISIDQYVIKNSVVGLLWGIGNIFMLLAASKAGLAIAFSFSQLGAIISIVGGILFLGETKTKKEMRWVVTGIICFIVGAILLGVVKS</sequence>
<keyword id="KW-1003">Cell membrane</keyword>
<keyword id="KW-0472">Membrane</keyword>
<keyword id="KW-0762">Sugar transport</keyword>
<keyword id="KW-0812">Transmembrane</keyword>
<keyword id="KW-1133">Transmembrane helix</keyword>
<keyword id="KW-0813">Transport</keyword>
<proteinExistence type="inferred from homology"/>
<feature type="chain" id="PRO_0000411363" description="Putative sugar uptake protein SPs1852">
    <location>
        <begin position="1"/>
        <end position="287"/>
    </location>
</feature>
<feature type="transmembrane region" description="Helical" evidence="1">
    <location>
        <begin position="4"/>
        <end position="26"/>
    </location>
</feature>
<feature type="transmembrane region" description="Helical" evidence="1">
    <location>
        <begin position="33"/>
        <end position="50"/>
    </location>
</feature>
<feature type="transmembrane region" description="Helical" evidence="1">
    <location>
        <begin position="55"/>
        <end position="72"/>
    </location>
</feature>
<feature type="transmembrane region" description="Helical" evidence="1">
    <location>
        <begin position="85"/>
        <end position="107"/>
    </location>
</feature>
<feature type="transmembrane region" description="Helical" evidence="1">
    <location>
        <begin position="117"/>
        <end position="134"/>
    </location>
</feature>
<feature type="transmembrane region" description="Helical" evidence="1">
    <location>
        <begin position="154"/>
        <end position="171"/>
    </location>
</feature>
<feature type="transmembrane region" description="Helical" evidence="1">
    <location>
        <begin position="181"/>
        <end position="200"/>
    </location>
</feature>
<feature type="transmembrane region" description="Helical" evidence="1">
    <location>
        <begin position="207"/>
        <end position="229"/>
    </location>
</feature>
<feature type="transmembrane region" description="Helical" evidence="1">
    <location>
        <begin position="234"/>
        <end position="256"/>
    </location>
</feature>
<feature type="transmembrane region" description="Helical" evidence="1">
    <location>
        <begin position="268"/>
        <end position="285"/>
    </location>
</feature>